<feature type="chain" id="PRO_1000136665" description="Macrodomain Ter protein">
    <location>
        <begin position="1"/>
        <end position="150"/>
    </location>
</feature>
<protein>
    <recommendedName>
        <fullName evidence="1">Macrodomain Ter protein</fullName>
    </recommendedName>
</protein>
<reference key="1">
    <citation type="journal article" date="2009" name="PLoS Genet.">
        <title>Organised genome dynamics in the Escherichia coli species results in highly diverse adaptive paths.</title>
        <authorList>
            <person name="Touchon M."/>
            <person name="Hoede C."/>
            <person name="Tenaillon O."/>
            <person name="Barbe V."/>
            <person name="Baeriswyl S."/>
            <person name="Bidet P."/>
            <person name="Bingen E."/>
            <person name="Bonacorsi S."/>
            <person name="Bouchier C."/>
            <person name="Bouvet O."/>
            <person name="Calteau A."/>
            <person name="Chiapello H."/>
            <person name="Clermont O."/>
            <person name="Cruveiller S."/>
            <person name="Danchin A."/>
            <person name="Diard M."/>
            <person name="Dossat C."/>
            <person name="Karoui M.E."/>
            <person name="Frapy E."/>
            <person name="Garry L."/>
            <person name="Ghigo J.M."/>
            <person name="Gilles A.M."/>
            <person name="Johnson J."/>
            <person name="Le Bouguenec C."/>
            <person name="Lescat M."/>
            <person name="Mangenot S."/>
            <person name="Martinez-Jehanne V."/>
            <person name="Matic I."/>
            <person name="Nassif X."/>
            <person name="Oztas S."/>
            <person name="Petit M.A."/>
            <person name="Pichon C."/>
            <person name="Rouy Z."/>
            <person name="Ruf C.S."/>
            <person name="Schneider D."/>
            <person name="Tourret J."/>
            <person name="Vacherie B."/>
            <person name="Vallenet D."/>
            <person name="Medigue C."/>
            <person name="Rocha E.P.C."/>
            <person name="Denamur E."/>
        </authorList>
    </citation>
    <scope>NUCLEOTIDE SEQUENCE [LARGE SCALE GENOMIC DNA]</scope>
    <source>
        <strain>IAI1</strain>
    </source>
</reference>
<gene>
    <name evidence="1" type="primary">matP</name>
    <name type="ordered locus">ECIAI1_0997</name>
</gene>
<dbReference type="EMBL" id="CU928160">
    <property type="protein sequence ID" value="CAQ97861.1"/>
    <property type="molecule type" value="Genomic_DNA"/>
</dbReference>
<dbReference type="RefSeq" id="WP_000877158.1">
    <property type="nucleotide sequence ID" value="NC_011741.1"/>
</dbReference>
<dbReference type="SMR" id="B7M885"/>
<dbReference type="GeneID" id="75204047"/>
<dbReference type="KEGG" id="ecr:ECIAI1_0997"/>
<dbReference type="HOGENOM" id="CLU_142157_0_0_6"/>
<dbReference type="GO" id="GO:0005737">
    <property type="term" value="C:cytoplasm"/>
    <property type="evidence" value="ECO:0007669"/>
    <property type="project" value="UniProtKB-SubCell"/>
</dbReference>
<dbReference type="GO" id="GO:0043565">
    <property type="term" value="F:sequence-specific DNA binding"/>
    <property type="evidence" value="ECO:0007669"/>
    <property type="project" value="UniProtKB-UniRule"/>
</dbReference>
<dbReference type="GO" id="GO:0051301">
    <property type="term" value="P:cell division"/>
    <property type="evidence" value="ECO:0007669"/>
    <property type="project" value="UniProtKB-UniRule"/>
</dbReference>
<dbReference type="GO" id="GO:0006355">
    <property type="term" value="P:regulation of DNA-templated transcription"/>
    <property type="evidence" value="ECO:0007669"/>
    <property type="project" value="InterPro"/>
</dbReference>
<dbReference type="FunFam" id="1.10.1220.10:FF:000004">
    <property type="entry name" value="Macrodomain Ter protein"/>
    <property type="match status" value="1"/>
</dbReference>
<dbReference type="FunFam" id="1.20.1270.380:FF:000001">
    <property type="entry name" value="Macrodomain Ter protein"/>
    <property type="match status" value="1"/>
</dbReference>
<dbReference type="Gene3D" id="1.20.1270.380">
    <property type="entry name" value="MatP, N-terminal domain"/>
    <property type="match status" value="1"/>
</dbReference>
<dbReference type="Gene3D" id="1.10.1220.10">
    <property type="entry name" value="Met repressor-like"/>
    <property type="match status" value="1"/>
</dbReference>
<dbReference type="HAMAP" id="MF_01073">
    <property type="entry name" value="MatP"/>
    <property type="match status" value="1"/>
</dbReference>
<dbReference type="InterPro" id="IPR013321">
    <property type="entry name" value="Arc_rbn_hlx_hlx"/>
</dbReference>
<dbReference type="InterPro" id="IPR009390">
    <property type="entry name" value="MatP"/>
</dbReference>
<dbReference type="InterPro" id="IPR035375">
    <property type="entry name" value="MatP_C"/>
</dbReference>
<dbReference type="InterPro" id="IPR035087">
    <property type="entry name" value="MatP_N"/>
</dbReference>
<dbReference type="InterPro" id="IPR038339">
    <property type="entry name" value="MatP_N_sf"/>
</dbReference>
<dbReference type="NCBIfam" id="NF003471">
    <property type="entry name" value="PRK05097.1"/>
    <property type="match status" value="1"/>
</dbReference>
<dbReference type="Pfam" id="PF06303">
    <property type="entry name" value="MatP"/>
    <property type="match status" value="1"/>
</dbReference>
<dbReference type="Pfam" id="PF17414">
    <property type="entry name" value="MatP_C"/>
    <property type="match status" value="1"/>
</dbReference>
<keyword id="KW-0131">Cell cycle</keyword>
<keyword id="KW-0132">Cell division</keyword>
<keyword id="KW-0963">Cytoplasm</keyword>
<keyword id="KW-0238">DNA-binding</keyword>
<name>MATP_ECO8A</name>
<organism>
    <name type="scientific">Escherichia coli O8 (strain IAI1)</name>
    <dbReference type="NCBI Taxonomy" id="585034"/>
    <lineage>
        <taxon>Bacteria</taxon>
        <taxon>Pseudomonadati</taxon>
        <taxon>Pseudomonadota</taxon>
        <taxon>Gammaproteobacteria</taxon>
        <taxon>Enterobacterales</taxon>
        <taxon>Enterobacteriaceae</taxon>
        <taxon>Escherichia</taxon>
    </lineage>
</organism>
<sequence length="150" mass="17702">MKYQQLENLESGWKWKYLVKKHREGELITRYIEASAAQEAVDVLLSLENEPVLVNGWIDKHMNPELVNRMKQTIRARRKRHFNAEHQHTRKKSIDLEFIVWQRLAGLAQRRGKTLSETIVQLIEDAENKEKYANKMSSLKHDLQALLGKE</sequence>
<comment type="function">
    <text evidence="1">Required for spatial organization of the terminus region of the chromosome (Ter macrodomain) during the cell cycle. Prevents early segregation of duplicated Ter macrodomains during cell division. Binds specifically to matS, which is a 13 bp signature motif repeated within the Ter macrodomain.</text>
</comment>
<comment type="subunit">
    <text evidence="1">Homodimer.</text>
</comment>
<comment type="subcellular location">
    <subcellularLocation>
        <location evidence="1">Cytoplasm</location>
    </subcellularLocation>
</comment>
<comment type="similarity">
    <text evidence="1">Belongs to the MatP family.</text>
</comment>
<proteinExistence type="inferred from homology"/>
<accession>B7M885</accession>
<evidence type="ECO:0000255" key="1">
    <source>
        <dbReference type="HAMAP-Rule" id="MF_01073"/>
    </source>
</evidence>